<accession>B2TXU2</accession>
<proteinExistence type="inferred from homology"/>
<feature type="chain" id="PRO_0000350409" description="Dual-specificity RNA methyltransferase RlmN">
    <location>
        <begin position="1"/>
        <end position="384"/>
    </location>
</feature>
<feature type="domain" description="Radical SAM core" evidence="2">
    <location>
        <begin position="111"/>
        <end position="350"/>
    </location>
</feature>
<feature type="active site" description="Proton acceptor" evidence="1">
    <location>
        <position position="105"/>
    </location>
</feature>
<feature type="active site" description="S-methylcysteine intermediate" evidence="1">
    <location>
        <position position="355"/>
    </location>
</feature>
<feature type="binding site" evidence="1">
    <location>
        <position position="125"/>
    </location>
    <ligand>
        <name>[4Fe-4S] cluster</name>
        <dbReference type="ChEBI" id="CHEBI:49883"/>
        <note>4Fe-4S-S-AdoMet</note>
    </ligand>
</feature>
<feature type="binding site" evidence="1">
    <location>
        <position position="129"/>
    </location>
    <ligand>
        <name>[4Fe-4S] cluster</name>
        <dbReference type="ChEBI" id="CHEBI:49883"/>
        <note>4Fe-4S-S-AdoMet</note>
    </ligand>
</feature>
<feature type="binding site" evidence="1">
    <location>
        <position position="132"/>
    </location>
    <ligand>
        <name>[4Fe-4S] cluster</name>
        <dbReference type="ChEBI" id="CHEBI:49883"/>
        <note>4Fe-4S-S-AdoMet</note>
    </ligand>
</feature>
<feature type="binding site" evidence="1">
    <location>
        <begin position="179"/>
        <end position="180"/>
    </location>
    <ligand>
        <name>S-adenosyl-L-methionine</name>
        <dbReference type="ChEBI" id="CHEBI:59789"/>
    </ligand>
</feature>
<feature type="binding site" evidence="1">
    <location>
        <position position="211"/>
    </location>
    <ligand>
        <name>S-adenosyl-L-methionine</name>
        <dbReference type="ChEBI" id="CHEBI:59789"/>
    </ligand>
</feature>
<feature type="binding site" evidence="1">
    <location>
        <begin position="233"/>
        <end position="235"/>
    </location>
    <ligand>
        <name>S-adenosyl-L-methionine</name>
        <dbReference type="ChEBI" id="CHEBI:59789"/>
    </ligand>
</feature>
<feature type="binding site" evidence="1">
    <location>
        <position position="312"/>
    </location>
    <ligand>
        <name>S-adenosyl-L-methionine</name>
        <dbReference type="ChEBI" id="CHEBI:59789"/>
    </ligand>
</feature>
<feature type="disulfide bond" description="(transient)" evidence="1">
    <location>
        <begin position="118"/>
        <end position="355"/>
    </location>
</feature>
<keyword id="KW-0004">4Fe-4S</keyword>
<keyword id="KW-0963">Cytoplasm</keyword>
<keyword id="KW-1015">Disulfide bond</keyword>
<keyword id="KW-0408">Iron</keyword>
<keyword id="KW-0411">Iron-sulfur</keyword>
<keyword id="KW-0479">Metal-binding</keyword>
<keyword id="KW-0489">Methyltransferase</keyword>
<keyword id="KW-1185">Reference proteome</keyword>
<keyword id="KW-0698">rRNA processing</keyword>
<keyword id="KW-0949">S-adenosyl-L-methionine</keyword>
<keyword id="KW-0808">Transferase</keyword>
<keyword id="KW-0819">tRNA processing</keyword>
<dbReference type="EC" id="2.1.1.192" evidence="1"/>
<dbReference type="EMBL" id="CP001063">
    <property type="protein sequence ID" value="ACD07634.1"/>
    <property type="molecule type" value="Genomic_DNA"/>
</dbReference>
<dbReference type="RefSeq" id="WP_000003317.1">
    <property type="nucleotide sequence ID" value="NC_010658.1"/>
</dbReference>
<dbReference type="SMR" id="B2TXU2"/>
<dbReference type="STRING" id="344609.SbBS512_E2892"/>
<dbReference type="KEGG" id="sbc:SbBS512_E2892"/>
<dbReference type="HOGENOM" id="CLU_029101_0_0_6"/>
<dbReference type="Proteomes" id="UP000001030">
    <property type="component" value="Chromosome"/>
</dbReference>
<dbReference type="GO" id="GO:0005737">
    <property type="term" value="C:cytoplasm"/>
    <property type="evidence" value="ECO:0007669"/>
    <property type="project" value="UniProtKB-SubCell"/>
</dbReference>
<dbReference type="GO" id="GO:0051539">
    <property type="term" value="F:4 iron, 4 sulfur cluster binding"/>
    <property type="evidence" value="ECO:0007669"/>
    <property type="project" value="UniProtKB-UniRule"/>
</dbReference>
<dbReference type="GO" id="GO:0046872">
    <property type="term" value="F:metal ion binding"/>
    <property type="evidence" value="ECO:0007669"/>
    <property type="project" value="UniProtKB-KW"/>
</dbReference>
<dbReference type="GO" id="GO:0070040">
    <property type="term" value="F:rRNA (adenine(2503)-C2-)-methyltransferase activity"/>
    <property type="evidence" value="ECO:0007669"/>
    <property type="project" value="UniProtKB-UniRule"/>
</dbReference>
<dbReference type="GO" id="GO:0019843">
    <property type="term" value="F:rRNA binding"/>
    <property type="evidence" value="ECO:0007669"/>
    <property type="project" value="UniProtKB-UniRule"/>
</dbReference>
<dbReference type="GO" id="GO:0002935">
    <property type="term" value="F:tRNA (adenine(37)-C2)-methyltransferase activity"/>
    <property type="evidence" value="ECO:0007669"/>
    <property type="project" value="UniProtKB-UniRule"/>
</dbReference>
<dbReference type="GO" id="GO:0000049">
    <property type="term" value="F:tRNA binding"/>
    <property type="evidence" value="ECO:0007669"/>
    <property type="project" value="UniProtKB-UniRule"/>
</dbReference>
<dbReference type="GO" id="GO:0070475">
    <property type="term" value="P:rRNA base methylation"/>
    <property type="evidence" value="ECO:0007669"/>
    <property type="project" value="UniProtKB-UniRule"/>
</dbReference>
<dbReference type="GO" id="GO:0030488">
    <property type="term" value="P:tRNA methylation"/>
    <property type="evidence" value="ECO:0007669"/>
    <property type="project" value="UniProtKB-UniRule"/>
</dbReference>
<dbReference type="CDD" id="cd01335">
    <property type="entry name" value="Radical_SAM"/>
    <property type="match status" value="1"/>
</dbReference>
<dbReference type="FunFam" id="1.10.150.530:FF:000001">
    <property type="entry name" value="Dual-specificity RNA methyltransferase RlmN"/>
    <property type="match status" value="1"/>
</dbReference>
<dbReference type="FunFam" id="3.20.20.70:FF:000008">
    <property type="entry name" value="Dual-specificity RNA methyltransferase RlmN"/>
    <property type="match status" value="1"/>
</dbReference>
<dbReference type="Gene3D" id="1.10.150.530">
    <property type="match status" value="1"/>
</dbReference>
<dbReference type="Gene3D" id="3.20.20.70">
    <property type="entry name" value="Aldolase class I"/>
    <property type="match status" value="1"/>
</dbReference>
<dbReference type="HAMAP" id="MF_01849">
    <property type="entry name" value="RNA_methyltr_RlmN"/>
    <property type="match status" value="1"/>
</dbReference>
<dbReference type="InterPro" id="IPR013785">
    <property type="entry name" value="Aldolase_TIM"/>
</dbReference>
<dbReference type="InterPro" id="IPR040072">
    <property type="entry name" value="Methyltransferase_A"/>
</dbReference>
<dbReference type="InterPro" id="IPR048641">
    <property type="entry name" value="RlmN_N"/>
</dbReference>
<dbReference type="InterPro" id="IPR027492">
    <property type="entry name" value="RNA_MTrfase_RlmN"/>
</dbReference>
<dbReference type="InterPro" id="IPR004383">
    <property type="entry name" value="rRNA_lsu_MTrfase_RlmN/Cfr"/>
</dbReference>
<dbReference type="InterPro" id="IPR007197">
    <property type="entry name" value="rSAM"/>
</dbReference>
<dbReference type="NCBIfam" id="NF008396">
    <property type="entry name" value="PRK11194.1"/>
    <property type="match status" value="1"/>
</dbReference>
<dbReference type="NCBIfam" id="TIGR00048">
    <property type="entry name" value="rRNA_mod_RlmN"/>
    <property type="match status" value="1"/>
</dbReference>
<dbReference type="PANTHER" id="PTHR30544">
    <property type="entry name" value="23S RRNA METHYLTRANSFERASE"/>
    <property type="match status" value="1"/>
</dbReference>
<dbReference type="PANTHER" id="PTHR30544:SF5">
    <property type="entry name" value="RADICAL SAM CORE DOMAIN-CONTAINING PROTEIN"/>
    <property type="match status" value="1"/>
</dbReference>
<dbReference type="Pfam" id="PF04055">
    <property type="entry name" value="Radical_SAM"/>
    <property type="match status" value="1"/>
</dbReference>
<dbReference type="Pfam" id="PF21016">
    <property type="entry name" value="RlmN_N"/>
    <property type="match status" value="1"/>
</dbReference>
<dbReference type="PIRSF" id="PIRSF006004">
    <property type="entry name" value="CHP00048"/>
    <property type="match status" value="1"/>
</dbReference>
<dbReference type="SFLD" id="SFLDF00275">
    <property type="entry name" value="adenosine_C2_methyltransferase"/>
    <property type="match status" value="1"/>
</dbReference>
<dbReference type="SFLD" id="SFLDG01062">
    <property type="entry name" value="methyltransferase_(Class_A)"/>
    <property type="match status" value="1"/>
</dbReference>
<dbReference type="SUPFAM" id="SSF102114">
    <property type="entry name" value="Radical SAM enzymes"/>
    <property type="match status" value="1"/>
</dbReference>
<dbReference type="PROSITE" id="PS51918">
    <property type="entry name" value="RADICAL_SAM"/>
    <property type="match status" value="1"/>
</dbReference>
<organism>
    <name type="scientific">Shigella boydii serotype 18 (strain CDC 3083-94 / BS512)</name>
    <dbReference type="NCBI Taxonomy" id="344609"/>
    <lineage>
        <taxon>Bacteria</taxon>
        <taxon>Pseudomonadati</taxon>
        <taxon>Pseudomonadota</taxon>
        <taxon>Gammaproteobacteria</taxon>
        <taxon>Enterobacterales</taxon>
        <taxon>Enterobacteriaceae</taxon>
        <taxon>Shigella</taxon>
    </lineage>
</organism>
<gene>
    <name evidence="1" type="primary">rlmN</name>
    <name type="ordered locus">SbBS512_E2892</name>
</gene>
<protein>
    <recommendedName>
        <fullName evidence="1">Dual-specificity RNA methyltransferase RlmN</fullName>
        <ecNumber evidence="1">2.1.1.192</ecNumber>
    </recommendedName>
    <alternativeName>
        <fullName evidence="1">23S rRNA (adenine(2503)-C(2))-methyltransferase</fullName>
    </alternativeName>
    <alternativeName>
        <fullName evidence="1">23S rRNA m2A2503 methyltransferase</fullName>
    </alternativeName>
    <alternativeName>
        <fullName evidence="1">Ribosomal RNA large subunit methyltransferase N</fullName>
    </alternativeName>
    <alternativeName>
        <fullName evidence="1">tRNA (adenine(37)-C(2))-methyltransferase</fullName>
    </alternativeName>
    <alternativeName>
        <fullName evidence="1">tRNA m2A37 methyltransferase</fullName>
    </alternativeName>
</protein>
<reference key="1">
    <citation type="submission" date="2008-05" db="EMBL/GenBank/DDBJ databases">
        <title>Complete sequence of Shigella boydii serotype 18 strain BS512.</title>
        <authorList>
            <person name="Rasko D.A."/>
            <person name="Rosovitz M."/>
            <person name="Maurelli A.T."/>
            <person name="Myers G."/>
            <person name="Seshadri R."/>
            <person name="Cer R."/>
            <person name="Jiang L."/>
            <person name="Ravel J."/>
            <person name="Sebastian Y."/>
        </authorList>
    </citation>
    <scope>NUCLEOTIDE SEQUENCE [LARGE SCALE GENOMIC DNA]</scope>
    <source>
        <strain>CDC 3083-94 / BS512</strain>
    </source>
</reference>
<evidence type="ECO:0000255" key="1">
    <source>
        <dbReference type="HAMAP-Rule" id="MF_01849"/>
    </source>
</evidence>
<evidence type="ECO:0000255" key="2">
    <source>
        <dbReference type="PROSITE-ProRule" id="PRU01266"/>
    </source>
</evidence>
<name>RLMN_SHIB3</name>
<sequence length="384" mass="43086">MSEQLVTPENVTTKDGKINLLDLNRQQMREFFKDLGEKPFRADQVMKWMYHYCCDNFDEMTDINKVLRGKLKEVAEIRAPEVVEEQRSSDGTIKWAIAVGDQRVETVYIPEDDRATLCVSSQVGCALECKFCSTAQQGFNRNLRVSEIIGQVWRAAKIVGAAKVTGQRPITNVVMMGMGEPLLNLNNVVPAMEIMLDDFGFGLSKRRVTLSTSGVVPALDKLGDMIDVALAISLHAPNDEIRDEIVPINKKYNIETFLAAVRRYLEKSNANQGRVTIEYVMLDHVNDGTEHAHQLAELLKDTPCKINLIPWNPFPGAPYGRSSNSRIDRFSKVLMSYGFTTIVRKTRGDDIDAACGQLAGDVIDRTKRTLRKRMQGEAIDIKAV</sequence>
<comment type="function">
    <text evidence="1">Specifically methylates position 2 of adenine 2503 in 23S rRNA and position 2 of adenine 37 in tRNAs. m2A2503 modification seems to play a crucial role in the proofreading step occurring at the peptidyl transferase center and thus would serve to optimize ribosomal fidelity.</text>
</comment>
<comment type="catalytic activity">
    <reaction evidence="1">
        <text>adenosine(2503) in 23S rRNA + 2 reduced [2Fe-2S]-[ferredoxin] + 2 S-adenosyl-L-methionine = 2-methyladenosine(2503) in 23S rRNA + 5'-deoxyadenosine + L-methionine + 2 oxidized [2Fe-2S]-[ferredoxin] + S-adenosyl-L-homocysteine</text>
        <dbReference type="Rhea" id="RHEA:42916"/>
        <dbReference type="Rhea" id="RHEA-COMP:10000"/>
        <dbReference type="Rhea" id="RHEA-COMP:10001"/>
        <dbReference type="Rhea" id="RHEA-COMP:10152"/>
        <dbReference type="Rhea" id="RHEA-COMP:10282"/>
        <dbReference type="ChEBI" id="CHEBI:17319"/>
        <dbReference type="ChEBI" id="CHEBI:33737"/>
        <dbReference type="ChEBI" id="CHEBI:33738"/>
        <dbReference type="ChEBI" id="CHEBI:57844"/>
        <dbReference type="ChEBI" id="CHEBI:57856"/>
        <dbReference type="ChEBI" id="CHEBI:59789"/>
        <dbReference type="ChEBI" id="CHEBI:74411"/>
        <dbReference type="ChEBI" id="CHEBI:74497"/>
        <dbReference type="EC" id="2.1.1.192"/>
    </reaction>
</comment>
<comment type="catalytic activity">
    <reaction evidence="1">
        <text>adenosine(37) in tRNA + 2 reduced [2Fe-2S]-[ferredoxin] + 2 S-adenosyl-L-methionine = 2-methyladenosine(37) in tRNA + 5'-deoxyadenosine + L-methionine + 2 oxidized [2Fe-2S]-[ferredoxin] + S-adenosyl-L-homocysteine</text>
        <dbReference type="Rhea" id="RHEA:43332"/>
        <dbReference type="Rhea" id="RHEA-COMP:10000"/>
        <dbReference type="Rhea" id="RHEA-COMP:10001"/>
        <dbReference type="Rhea" id="RHEA-COMP:10162"/>
        <dbReference type="Rhea" id="RHEA-COMP:10485"/>
        <dbReference type="ChEBI" id="CHEBI:17319"/>
        <dbReference type="ChEBI" id="CHEBI:33737"/>
        <dbReference type="ChEBI" id="CHEBI:33738"/>
        <dbReference type="ChEBI" id="CHEBI:57844"/>
        <dbReference type="ChEBI" id="CHEBI:57856"/>
        <dbReference type="ChEBI" id="CHEBI:59789"/>
        <dbReference type="ChEBI" id="CHEBI:74411"/>
        <dbReference type="ChEBI" id="CHEBI:74497"/>
        <dbReference type="EC" id="2.1.1.192"/>
    </reaction>
</comment>
<comment type="cofactor">
    <cofactor evidence="1">
        <name>[4Fe-4S] cluster</name>
        <dbReference type="ChEBI" id="CHEBI:49883"/>
    </cofactor>
    <text evidence="1">Binds 1 [4Fe-4S] cluster. The cluster is coordinated with 3 cysteines and an exchangeable S-adenosyl-L-methionine.</text>
</comment>
<comment type="subcellular location">
    <subcellularLocation>
        <location evidence="1">Cytoplasm</location>
    </subcellularLocation>
</comment>
<comment type="miscellaneous">
    <text evidence="1">Reaction proceeds by a ping-pong mechanism involving intermediate methylation of a conserved cysteine residue.</text>
</comment>
<comment type="similarity">
    <text evidence="1">Belongs to the radical SAM superfamily. RlmN family.</text>
</comment>